<reference key="1">
    <citation type="journal article" date="2003" name="Science">
        <title>Role of mobile DNA in the evolution of vancomycin-resistant Enterococcus faecalis.</title>
        <authorList>
            <person name="Paulsen I.T."/>
            <person name="Banerjei L."/>
            <person name="Myers G.S.A."/>
            <person name="Nelson K.E."/>
            <person name="Seshadri R."/>
            <person name="Read T.D."/>
            <person name="Fouts D.E."/>
            <person name="Eisen J.A."/>
            <person name="Gill S.R."/>
            <person name="Heidelberg J.F."/>
            <person name="Tettelin H."/>
            <person name="Dodson R.J."/>
            <person name="Umayam L.A."/>
            <person name="Brinkac L.M."/>
            <person name="Beanan M.J."/>
            <person name="Daugherty S.C."/>
            <person name="DeBoy R.T."/>
            <person name="Durkin S.A."/>
            <person name="Kolonay J.F."/>
            <person name="Madupu R."/>
            <person name="Nelson W.C."/>
            <person name="Vamathevan J.J."/>
            <person name="Tran B."/>
            <person name="Upton J."/>
            <person name="Hansen T."/>
            <person name="Shetty J."/>
            <person name="Khouri H.M."/>
            <person name="Utterback T.R."/>
            <person name="Radune D."/>
            <person name="Ketchum K.A."/>
            <person name="Dougherty B.A."/>
            <person name="Fraser C.M."/>
        </authorList>
    </citation>
    <scope>NUCLEOTIDE SEQUENCE [LARGE SCALE GENOMIC DNA]</scope>
    <source>
        <strain>ATCC 700802 / V583</strain>
    </source>
</reference>
<gene>
    <name evidence="1" type="primary">infC</name>
    <name type="ordered locus">EF_0914</name>
</gene>
<dbReference type="EMBL" id="AE016830">
    <property type="protein sequence ID" value="AAO80722.1"/>
    <property type="molecule type" value="Genomic_DNA"/>
</dbReference>
<dbReference type="RefSeq" id="NP_814652.1">
    <property type="nucleotide sequence ID" value="NC_004668.1"/>
</dbReference>
<dbReference type="RefSeq" id="WP_002355797.1">
    <property type="nucleotide sequence ID" value="NZ_KE136527.1"/>
</dbReference>
<dbReference type="SMR" id="Q837C9"/>
<dbReference type="STRING" id="226185.EF_0914"/>
<dbReference type="EnsemblBacteria" id="AAO80722">
    <property type="protein sequence ID" value="AAO80722"/>
    <property type="gene ID" value="EF_0914"/>
</dbReference>
<dbReference type="GeneID" id="60893251"/>
<dbReference type="KEGG" id="efa:EF0914"/>
<dbReference type="PATRIC" id="fig|226185.45.peg.3122"/>
<dbReference type="eggNOG" id="COG0290">
    <property type="taxonomic scope" value="Bacteria"/>
</dbReference>
<dbReference type="HOGENOM" id="CLU_054919_3_2_9"/>
<dbReference type="Proteomes" id="UP000001415">
    <property type="component" value="Chromosome"/>
</dbReference>
<dbReference type="GO" id="GO:0005829">
    <property type="term" value="C:cytosol"/>
    <property type="evidence" value="ECO:0007669"/>
    <property type="project" value="TreeGrafter"/>
</dbReference>
<dbReference type="GO" id="GO:0016020">
    <property type="term" value="C:membrane"/>
    <property type="evidence" value="ECO:0007669"/>
    <property type="project" value="TreeGrafter"/>
</dbReference>
<dbReference type="GO" id="GO:0043022">
    <property type="term" value="F:ribosome binding"/>
    <property type="evidence" value="ECO:0007669"/>
    <property type="project" value="TreeGrafter"/>
</dbReference>
<dbReference type="GO" id="GO:0003743">
    <property type="term" value="F:translation initiation factor activity"/>
    <property type="evidence" value="ECO:0007669"/>
    <property type="project" value="UniProtKB-UniRule"/>
</dbReference>
<dbReference type="GO" id="GO:0032790">
    <property type="term" value="P:ribosome disassembly"/>
    <property type="evidence" value="ECO:0007669"/>
    <property type="project" value="TreeGrafter"/>
</dbReference>
<dbReference type="FunFam" id="3.10.20.80:FF:000001">
    <property type="entry name" value="Translation initiation factor IF-3"/>
    <property type="match status" value="1"/>
</dbReference>
<dbReference type="FunFam" id="3.30.110.10:FF:000001">
    <property type="entry name" value="Translation initiation factor IF-3"/>
    <property type="match status" value="1"/>
</dbReference>
<dbReference type="Gene3D" id="3.30.110.10">
    <property type="entry name" value="Translation initiation factor 3 (IF-3), C-terminal domain"/>
    <property type="match status" value="1"/>
</dbReference>
<dbReference type="Gene3D" id="3.10.20.80">
    <property type="entry name" value="Translation initiation factor 3 (IF-3), N-terminal domain"/>
    <property type="match status" value="1"/>
</dbReference>
<dbReference type="HAMAP" id="MF_00080">
    <property type="entry name" value="IF_3"/>
    <property type="match status" value="1"/>
</dbReference>
<dbReference type="InterPro" id="IPR036788">
    <property type="entry name" value="T_IF-3_C_sf"/>
</dbReference>
<dbReference type="InterPro" id="IPR036787">
    <property type="entry name" value="T_IF-3_N_sf"/>
</dbReference>
<dbReference type="InterPro" id="IPR019813">
    <property type="entry name" value="Translation_initiation_fac3_CS"/>
</dbReference>
<dbReference type="InterPro" id="IPR001288">
    <property type="entry name" value="Translation_initiation_fac_3"/>
</dbReference>
<dbReference type="InterPro" id="IPR019815">
    <property type="entry name" value="Translation_initiation_fac_3_C"/>
</dbReference>
<dbReference type="InterPro" id="IPR019814">
    <property type="entry name" value="Translation_initiation_fac_3_N"/>
</dbReference>
<dbReference type="NCBIfam" id="TIGR00168">
    <property type="entry name" value="infC"/>
    <property type="match status" value="1"/>
</dbReference>
<dbReference type="PANTHER" id="PTHR10938">
    <property type="entry name" value="TRANSLATION INITIATION FACTOR IF-3"/>
    <property type="match status" value="1"/>
</dbReference>
<dbReference type="PANTHER" id="PTHR10938:SF0">
    <property type="entry name" value="TRANSLATION INITIATION FACTOR IF-3, MITOCHONDRIAL"/>
    <property type="match status" value="1"/>
</dbReference>
<dbReference type="Pfam" id="PF00707">
    <property type="entry name" value="IF3_C"/>
    <property type="match status" value="1"/>
</dbReference>
<dbReference type="Pfam" id="PF05198">
    <property type="entry name" value="IF3_N"/>
    <property type="match status" value="1"/>
</dbReference>
<dbReference type="SUPFAM" id="SSF55200">
    <property type="entry name" value="Translation initiation factor IF3, C-terminal domain"/>
    <property type="match status" value="1"/>
</dbReference>
<dbReference type="SUPFAM" id="SSF54364">
    <property type="entry name" value="Translation initiation factor IF3, N-terminal domain"/>
    <property type="match status" value="1"/>
</dbReference>
<dbReference type="PROSITE" id="PS00938">
    <property type="entry name" value="IF3"/>
    <property type="match status" value="1"/>
</dbReference>
<evidence type="ECO:0000255" key="1">
    <source>
        <dbReference type="HAMAP-Rule" id="MF_00080"/>
    </source>
</evidence>
<protein>
    <recommendedName>
        <fullName evidence="1">Translation initiation factor IF-3</fullName>
    </recommendedName>
</protein>
<organism>
    <name type="scientific">Enterococcus faecalis (strain ATCC 700802 / V583)</name>
    <dbReference type="NCBI Taxonomy" id="226185"/>
    <lineage>
        <taxon>Bacteria</taxon>
        <taxon>Bacillati</taxon>
        <taxon>Bacillota</taxon>
        <taxon>Bacilli</taxon>
        <taxon>Lactobacillales</taxon>
        <taxon>Enterococcaceae</taxon>
        <taxon>Enterococcus</taxon>
    </lineage>
</organism>
<sequence length="173" mass="19518">MTIAKDMMVNDGIRARELRLIGQDGEQLGVKTKAEALQIAESANLDLVLVAPGAKPPVARIMDYGKFRFEQQKKEREARKKQKVINVKEVRLSPTIDVNDFNTKLRNARKFLEKGDKVKASIRFKGRAITHKEIGQKVLDRLAEETADIATVEQKAKMDGRSMFLTLAPKNDK</sequence>
<keyword id="KW-0963">Cytoplasm</keyword>
<keyword id="KW-0396">Initiation factor</keyword>
<keyword id="KW-0648">Protein biosynthesis</keyword>
<keyword id="KW-1185">Reference proteome</keyword>
<proteinExistence type="inferred from homology"/>
<comment type="function">
    <text evidence="1">IF-3 binds to the 30S ribosomal subunit and shifts the equilibrium between 70S ribosomes and their 50S and 30S subunits in favor of the free subunits, thus enhancing the availability of 30S subunits on which protein synthesis initiation begins.</text>
</comment>
<comment type="subunit">
    <text evidence="1">Monomer.</text>
</comment>
<comment type="subcellular location">
    <subcellularLocation>
        <location evidence="1">Cytoplasm</location>
    </subcellularLocation>
</comment>
<comment type="similarity">
    <text evidence="1">Belongs to the IF-3 family.</text>
</comment>
<feature type="chain" id="PRO_0000177518" description="Translation initiation factor IF-3">
    <location>
        <begin position="1"/>
        <end position="173"/>
    </location>
</feature>
<accession>Q837C9</accession>
<name>IF3_ENTFA</name>